<protein>
    <recommendedName>
        <fullName evidence="1">Nicotinate phosphoribosyltransferase</fullName>
        <shortName evidence="1">NAPRTase</shortName>
        <ecNumber evidence="1">6.3.4.21</ecNumber>
    </recommendedName>
</protein>
<gene>
    <name evidence="1" type="primary">pncB</name>
    <name type="ordered locus">BUAPTUC7_355</name>
</gene>
<organism>
    <name type="scientific">Buchnera aphidicola subsp. Acyrthosiphon pisum (strain Tuc7)</name>
    <dbReference type="NCBI Taxonomy" id="561501"/>
    <lineage>
        <taxon>Bacteria</taxon>
        <taxon>Pseudomonadati</taxon>
        <taxon>Pseudomonadota</taxon>
        <taxon>Gammaproteobacteria</taxon>
        <taxon>Enterobacterales</taxon>
        <taxon>Erwiniaceae</taxon>
        <taxon>Buchnera</taxon>
    </lineage>
</organism>
<name>PNCB_BUCAT</name>
<sequence>MKRYDYPIVKTLLDTDAYKLHMQQAVFYHYKNVNVVAEFLCRGDNFLGCYANILLDQISMMRSLSLSHEEYVYMTSFPFFKKEYLHWLKKFRYNVSQVKINSYQGRLHIRISGLWKEVILWEVPILALISEVFHGNFSPEITSQSALQYLDIKLKKFFNRTKYIDLSHLKIVDFGTRRRFSYDVQYSIVKRLKESFPFLIGSSNYHIARILKIKPVGTQAHEWFQAHQQIGSNLKNSQILALQKWLYQYKNHLGIALTDSITMDAFLDDFNLHFASFYQGIRHDSGDPVKWGEKALKHYEKLGIDPCTKTLLFSDNLDFKKIISLYKKFHKKINVIFGIGTKLTCDIPYVKPLNIVIKLVECNGKPVAKISDSPGKTFCLDRIFLKNLCQVFNVSLKNR</sequence>
<keyword id="KW-0436">Ligase</keyword>
<keyword id="KW-0597">Phosphoprotein</keyword>
<keyword id="KW-0662">Pyridine nucleotide biosynthesis</keyword>
<feature type="chain" id="PRO_1000146837" description="Nicotinate phosphoribosyltransferase">
    <location>
        <begin position="1"/>
        <end position="399"/>
    </location>
</feature>
<feature type="modified residue" description="Phosphohistidine; by autocatalysis" evidence="1">
    <location>
        <position position="221"/>
    </location>
</feature>
<evidence type="ECO:0000255" key="1">
    <source>
        <dbReference type="HAMAP-Rule" id="MF_00570"/>
    </source>
</evidence>
<dbReference type="EC" id="6.3.4.21" evidence="1"/>
<dbReference type="EMBL" id="CP001158">
    <property type="protein sequence ID" value="ACL30163.1"/>
    <property type="molecule type" value="Genomic_DNA"/>
</dbReference>
<dbReference type="RefSeq" id="WP_009874317.1">
    <property type="nucleotide sequence ID" value="NC_011834.1"/>
</dbReference>
<dbReference type="SMR" id="B8D7P8"/>
<dbReference type="KEGG" id="bau:BUAPTUC7_355"/>
<dbReference type="HOGENOM" id="CLU_030991_1_0_6"/>
<dbReference type="UniPathway" id="UPA00253">
    <property type="reaction ID" value="UER00457"/>
</dbReference>
<dbReference type="GO" id="GO:0005829">
    <property type="term" value="C:cytosol"/>
    <property type="evidence" value="ECO:0007669"/>
    <property type="project" value="TreeGrafter"/>
</dbReference>
<dbReference type="GO" id="GO:0004516">
    <property type="term" value="F:nicotinate phosphoribosyltransferase activity"/>
    <property type="evidence" value="ECO:0007669"/>
    <property type="project" value="UniProtKB-UniRule"/>
</dbReference>
<dbReference type="GO" id="GO:0034355">
    <property type="term" value="P:NAD biosynthetic process via the salvage pathway"/>
    <property type="evidence" value="ECO:0007669"/>
    <property type="project" value="TreeGrafter"/>
</dbReference>
<dbReference type="CDD" id="cd01401">
    <property type="entry name" value="PncB_like"/>
    <property type="match status" value="1"/>
</dbReference>
<dbReference type="Gene3D" id="3.20.140.10">
    <property type="entry name" value="nicotinate phosphoribosyltransferase"/>
    <property type="match status" value="1"/>
</dbReference>
<dbReference type="HAMAP" id="MF_00570">
    <property type="entry name" value="NAPRTase"/>
    <property type="match status" value="1"/>
</dbReference>
<dbReference type="InterPro" id="IPR041525">
    <property type="entry name" value="N/Namide_PRibTrfase"/>
</dbReference>
<dbReference type="InterPro" id="IPR040727">
    <property type="entry name" value="NAPRTase_N"/>
</dbReference>
<dbReference type="InterPro" id="IPR006406">
    <property type="entry name" value="Nic_PRibTrfase"/>
</dbReference>
<dbReference type="InterPro" id="IPR007229">
    <property type="entry name" value="Nic_PRibTrfase-Fam"/>
</dbReference>
<dbReference type="InterPro" id="IPR036068">
    <property type="entry name" value="Nicotinate_pribotase-like_C"/>
</dbReference>
<dbReference type="NCBIfam" id="TIGR01514">
    <property type="entry name" value="NAPRTase"/>
    <property type="match status" value="1"/>
</dbReference>
<dbReference type="NCBIfam" id="NF003704">
    <property type="entry name" value="PRK05321.1"/>
    <property type="match status" value="1"/>
</dbReference>
<dbReference type="PANTHER" id="PTHR11098">
    <property type="entry name" value="NICOTINATE PHOSPHORIBOSYLTRANSFERASE"/>
    <property type="match status" value="1"/>
</dbReference>
<dbReference type="PANTHER" id="PTHR11098:SF1">
    <property type="entry name" value="NICOTINATE PHOSPHORIBOSYLTRANSFERASE"/>
    <property type="match status" value="1"/>
</dbReference>
<dbReference type="Pfam" id="PF04095">
    <property type="entry name" value="NAPRTase"/>
    <property type="match status" value="1"/>
</dbReference>
<dbReference type="Pfam" id="PF17767">
    <property type="entry name" value="NAPRTase_N"/>
    <property type="match status" value="1"/>
</dbReference>
<dbReference type="PIRSF" id="PIRSF000484">
    <property type="entry name" value="NAPRT"/>
    <property type="match status" value="1"/>
</dbReference>
<dbReference type="SUPFAM" id="SSF51690">
    <property type="entry name" value="Nicotinate/Quinolinate PRTase C-terminal domain-like"/>
    <property type="match status" value="1"/>
</dbReference>
<dbReference type="SUPFAM" id="SSF54675">
    <property type="entry name" value="Nicotinate/Quinolinate PRTase N-terminal domain-like"/>
    <property type="match status" value="1"/>
</dbReference>
<comment type="function">
    <text evidence="1">Catalyzes the synthesis of beta-nicotinate D-ribonucleotide from nicotinate and 5-phospho-D-ribose 1-phosphate at the expense of ATP.</text>
</comment>
<comment type="catalytic activity">
    <reaction evidence="1">
        <text>nicotinate + 5-phospho-alpha-D-ribose 1-diphosphate + ATP + H2O = nicotinate beta-D-ribonucleotide + ADP + phosphate + diphosphate</text>
        <dbReference type="Rhea" id="RHEA:36163"/>
        <dbReference type="ChEBI" id="CHEBI:15377"/>
        <dbReference type="ChEBI" id="CHEBI:30616"/>
        <dbReference type="ChEBI" id="CHEBI:32544"/>
        <dbReference type="ChEBI" id="CHEBI:33019"/>
        <dbReference type="ChEBI" id="CHEBI:43474"/>
        <dbReference type="ChEBI" id="CHEBI:57502"/>
        <dbReference type="ChEBI" id="CHEBI:58017"/>
        <dbReference type="ChEBI" id="CHEBI:456216"/>
        <dbReference type="EC" id="6.3.4.21"/>
    </reaction>
</comment>
<comment type="pathway">
    <text evidence="1">Cofactor biosynthesis; NAD(+) biosynthesis; nicotinate D-ribonucleotide from nicotinate: step 1/1.</text>
</comment>
<comment type="PTM">
    <text evidence="1">Transiently phosphorylated on a His residue during the reaction cycle. Phosphorylation strongly increases the affinity for substrates and increases the rate of nicotinate D-ribonucleotide production. Dephosphorylation regenerates the low-affinity form of the enzyme, leading to product release.</text>
</comment>
<comment type="similarity">
    <text evidence="1">Belongs to the NAPRTase family.</text>
</comment>
<accession>B8D7P8</accession>
<proteinExistence type="inferred from homology"/>
<reference key="1">
    <citation type="journal article" date="2009" name="Science">
        <title>The dynamics and time scale of ongoing genomic erosion in symbiotic bacteria.</title>
        <authorList>
            <person name="Moran N.A."/>
            <person name="McLaughlin H.J."/>
            <person name="Sorek R."/>
        </authorList>
    </citation>
    <scope>NUCLEOTIDE SEQUENCE [LARGE SCALE GENOMIC DNA]</scope>
    <source>
        <strain>Tuc7</strain>
    </source>
</reference>